<reference key="1">
    <citation type="journal article" date="2000" name="Clin. Cancer Res.">
        <title>Epigenetic regulation of gene expression in cervical cancer cells by the tumor microenvironment.</title>
        <authorList>
            <person name="Denko N.C."/>
            <person name="Schindler C."/>
            <person name="Koong A."/>
            <person name="Laderoute K."/>
            <person name="Green C."/>
            <person name="Giaccia A.J."/>
        </authorList>
    </citation>
    <scope>NUCLEOTIDE SEQUENCE [MRNA]</scope>
    <scope>INDUCTION</scope>
    <source>
        <tissue>Cervix carcinoma</tissue>
    </source>
</reference>
<reference key="2">
    <citation type="submission" date="2005-04" db="EMBL/GenBank/DDBJ databases">
        <authorList>
            <person name="Suzuki Y."/>
            <person name="Sugano S."/>
            <person name="Totoki Y."/>
            <person name="Toyoda A."/>
            <person name="Takeda T."/>
            <person name="Sakaki Y."/>
            <person name="Tanaka A."/>
            <person name="Yokoyama S."/>
        </authorList>
    </citation>
    <scope>NUCLEOTIDE SEQUENCE [LARGE SCALE MRNA]</scope>
    <source>
        <tissue>Coronary artery</tissue>
    </source>
</reference>
<reference key="3">
    <citation type="journal article" date="2003" name="Science">
        <title>Human chromosome 7: DNA sequence and biology.</title>
        <authorList>
            <person name="Scherer S.W."/>
            <person name="Cheung J."/>
            <person name="MacDonald J.R."/>
            <person name="Osborne L.R."/>
            <person name="Nakabayashi K."/>
            <person name="Herbrick J.-A."/>
            <person name="Carson A.R."/>
            <person name="Parker-Katiraee L."/>
            <person name="Skaug J."/>
            <person name="Khaja R."/>
            <person name="Zhang J."/>
            <person name="Hudek A.K."/>
            <person name="Li M."/>
            <person name="Haddad M."/>
            <person name="Duggan G.E."/>
            <person name="Fernandez B.A."/>
            <person name="Kanematsu E."/>
            <person name="Gentles S."/>
            <person name="Christopoulos C.C."/>
            <person name="Choufani S."/>
            <person name="Kwasnicka D."/>
            <person name="Zheng X.H."/>
            <person name="Lai Z."/>
            <person name="Nusskern D.R."/>
            <person name="Zhang Q."/>
            <person name="Gu Z."/>
            <person name="Lu F."/>
            <person name="Zeesman S."/>
            <person name="Nowaczyk M.J."/>
            <person name="Teshima I."/>
            <person name="Chitayat D."/>
            <person name="Shuman C."/>
            <person name="Weksberg R."/>
            <person name="Zackai E.H."/>
            <person name="Grebe T.A."/>
            <person name="Cox S.R."/>
            <person name="Kirkpatrick S.J."/>
            <person name="Rahman N."/>
            <person name="Friedman J.M."/>
            <person name="Heng H.H.Q."/>
            <person name="Pelicci P.G."/>
            <person name="Lo-Coco F."/>
            <person name="Belloni E."/>
            <person name="Shaffer L.G."/>
            <person name="Pober B."/>
            <person name="Morton C.C."/>
            <person name="Gusella J.F."/>
            <person name="Bruns G.A.P."/>
            <person name="Korf B.R."/>
            <person name="Quade B.J."/>
            <person name="Ligon A.H."/>
            <person name="Ferguson H."/>
            <person name="Higgins A.W."/>
            <person name="Leach N.T."/>
            <person name="Herrick S.R."/>
            <person name="Lemyre E."/>
            <person name="Farra C.G."/>
            <person name="Kim H.-G."/>
            <person name="Summers A.M."/>
            <person name="Gripp K.W."/>
            <person name="Roberts W."/>
            <person name="Szatmari P."/>
            <person name="Winsor E.J.T."/>
            <person name="Grzeschik K.-H."/>
            <person name="Teebi A."/>
            <person name="Minassian B.A."/>
            <person name="Kere J."/>
            <person name="Armengol L."/>
            <person name="Pujana M.A."/>
            <person name="Estivill X."/>
            <person name="Wilson M.D."/>
            <person name="Koop B.F."/>
            <person name="Tosi S."/>
            <person name="Moore G.E."/>
            <person name="Boright A.P."/>
            <person name="Zlotorynski E."/>
            <person name="Kerem B."/>
            <person name="Kroisel P.M."/>
            <person name="Petek E."/>
            <person name="Oscier D.G."/>
            <person name="Mould S.J."/>
            <person name="Doehner H."/>
            <person name="Doehner K."/>
            <person name="Rommens J.M."/>
            <person name="Vincent J.B."/>
            <person name="Venter J.C."/>
            <person name="Li P.W."/>
            <person name="Mural R.J."/>
            <person name="Adams M.D."/>
            <person name="Tsui L.-C."/>
        </authorList>
    </citation>
    <scope>NUCLEOTIDE SEQUENCE [LARGE SCALE GENOMIC DNA]</scope>
</reference>
<reference key="4">
    <citation type="journal article" date="2004" name="Genome Res.">
        <title>The status, quality, and expansion of the NIH full-length cDNA project: the Mammalian Gene Collection (MGC).</title>
        <authorList>
            <consortium name="The MGC Project Team"/>
        </authorList>
    </citation>
    <scope>NUCLEOTIDE SEQUENCE [LARGE SCALE MRNA]</scope>
    <source>
        <tissue>Cerebellum</tissue>
        <tissue>Lung carcinoma</tissue>
    </source>
</reference>
<reference key="5">
    <citation type="journal article" date="2005" name="Cancer Res.">
        <title>Hypoxia-inducible protein 2 (HIG2), a novel diagnostic marker for renal cell carcinoma and potential target for molecular therapy.</title>
        <authorList>
            <person name="Togashi A."/>
            <person name="Katagiri T."/>
            <person name="Ashida S."/>
            <person name="Fujioka T."/>
            <person name="Maruyama O."/>
            <person name="Wakumoto Y."/>
            <person name="Sakamoto Y."/>
            <person name="Fujime M."/>
            <person name="Kawachi Y."/>
            <person name="Shuin T."/>
            <person name="Nakamura Y."/>
        </authorList>
    </citation>
    <scope>FUNCTION</scope>
    <scope>SUBCELLULAR LOCATION</scope>
    <scope>TISSUE SPECIFICITY</scope>
</reference>
<reference key="6">
    <citation type="journal article" date="2008" name="Proc. Natl. Acad. Sci. U.S.A.">
        <title>A quantitative atlas of mitotic phosphorylation.</title>
        <authorList>
            <person name="Dephoure N."/>
            <person name="Zhou C."/>
            <person name="Villen J."/>
            <person name="Beausoleil S.A."/>
            <person name="Bakalarski C.E."/>
            <person name="Elledge S.J."/>
            <person name="Gygi S.P."/>
        </authorList>
    </citation>
    <scope>PHOSPHORYLATION [LARGE SCALE ANALYSIS] AT SER-44</scope>
    <scope>IDENTIFICATION BY MASS SPECTROMETRY [LARGE SCALE ANALYSIS]</scope>
    <source>
        <tissue>Cervix carcinoma</tissue>
    </source>
</reference>
<reference key="7">
    <citation type="journal article" date="2010" name="FASEB J.">
        <title>Hypoxia-inducible protein 2 is a novel lipid droplet protein and a specific target gene of hypoxia-inducible factor-1.</title>
        <authorList>
            <person name="Gimm T."/>
            <person name="Wiese M."/>
            <person name="Teschemacher B."/>
            <person name="Deggerich A."/>
            <person name="Schodel J."/>
            <person name="Knaup K.X."/>
            <person name="Hackenbeck T."/>
            <person name="Hellerbrand C."/>
            <person name="Amann K."/>
            <person name="Wiesener M.S."/>
            <person name="Honing S."/>
            <person name="Eckardt K.U."/>
            <person name="Warnecke C."/>
        </authorList>
    </citation>
    <scope>FUNCTION</scope>
    <scope>SUBCELLULAR LOCATION</scope>
    <scope>TISSUE SPECIFICITY</scope>
    <scope>INDUCTION</scope>
    <scope>MUTAGENESIS OF 8-TYR-LEU-9; THR-41 AND SER-44</scope>
</reference>
<reference key="8">
    <citation type="journal article" date="2011" name="Eur. J. Gynaecol. Oncol.">
        <title>Expression of hypoxia-inducible 2 (HIG2) protein in uterine cancer.</title>
        <authorList>
            <person name="Nishimura S."/>
            <person name="Tsuda H."/>
            <person name="Nomura H."/>
            <person name="Kataoka F."/>
            <person name="Chiyoda T."/>
            <person name="Tanaka H."/>
            <person name="Tanaka K."/>
            <person name="Susumu N."/>
            <person name="Aoki D."/>
        </authorList>
    </citation>
    <scope>TISSUE SPECIFICITY</scope>
</reference>
<keyword id="KW-0551">Lipid droplet</keyword>
<keyword id="KW-0472">Membrane</keyword>
<keyword id="KW-0597">Phosphoprotein</keyword>
<keyword id="KW-1267">Proteomics identification</keyword>
<keyword id="KW-1185">Reference proteome</keyword>
<keyword id="KW-0964">Secreted</keyword>
<keyword id="KW-0346">Stress response</keyword>
<keyword id="KW-0812">Transmembrane</keyword>
<keyword id="KW-1133">Transmembrane helix</keyword>
<evidence type="ECO:0000255" key="1"/>
<evidence type="ECO:0000256" key="2">
    <source>
        <dbReference type="SAM" id="MobiDB-lite"/>
    </source>
</evidence>
<evidence type="ECO:0000269" key="3">
    <source>
    </source>
</evidence>
<evidence type="ECO:0000269" key="4">
    <source>
    </source>
</evidence>
<evidence type="ECO:0000269" key="5">
    <source>
    </source>
</evidence>
<evidence type="ECO:0000269" key="6">
    <source>
    </source>
</evidence>
<evidence type="ECO:0000305" key="7"/>
<evidence type="ECO:0007744" key="8">
    <source>
    </source>
</evidence>
<accession>Q9Y5L2</accession>
<accession>A4D0Z5</accession>
<accession>Q52LY5</accession>
<accession>Q53HJ7</accession>
<feature type="chain" id="PRO_0000083976" description="Hypoxia-inducible lipid droplet-associated protein">
    <location>
        <begin position="1"/>
        <end position="63"/>
    </location>
</feature>
<feature type="transmembrane region" description="Helical" evidence="1">
    <location>
        <begin position="7"/>
        <end position="23"/>
    </location>
</feature>
<feature type="region of interest" description="Required for targeting to lipid droplets">
    <location>
        <begin position="1"/>
        <end position="37"/>
    </location>
</feature>
<feature type="region of interest" description="Disordered" evidence="2">
    <location>
        <begin position="31"/>
        <end position="63"/>
    </location>
</feature>
<feature type="compositionally biased region" description="Polar residues" evidence="2">
    <location>
        <begin position="35"/>
        <end position="51"/>
    </location>
</feature>
<feature type="modified residue" description="Phosphoserine" evidence="8">
    <location>
        <position position="44"/>
    </location>
</feature>
<feature type="mutagenesis site" description="Loss of targeting to lipid droplets and elimination of protein." evidence="5">
    <original>YL</original>
    <variation>DD</variation>
    <location>
        <begin position="8"/>
        <end position="9"/>
    </location>
</feature>
<feature type="mutagenesis site" description="No effect on lipid droplet targeting or protein expression; when associated with K-44." evidence="5">
    <original>T</original>
    <variation>K</variation>
    <location>
        <position position="41"/>
    </location>
</feature>
<feature type="mutagenesis site" description="No effect on lipid droplet targeting or protein expression; when associated with K-41." evidence="5">
    <original>S</original>
    <variation>K</variation>
    <location>
        <position position="44"/>
    </location>
</feature>
<feature type="sequence conflict" description="In Ref. 2; BAD96303." evidence="7" ref="2">
    <original>V</original>
    <variation>T</variation>
    <location>
        <position position="21"/>
    </location>
</feature>
<gene>
    <name type="primary">HILPDA</name>
    <name type="synonym">C7orf68</name>
    <name type="synonym">HIG2</name>
</gene>
<comment type="function">
    <text evidence="4 5">Increases intracellular lipid accumulation. Stimulates expression of cytokines including IL6, MIF and VEGFA. Enhances cell growth and proliferation.</text>
</comment>
<comment type="interaction">
    <interactant intactId="EBI-8803836">
        <id>Q9Y5L2</id>
    </interactant>
    <interactant intactId="EBI-8803802">
        <id>Q9ULW2</id>
        <label>FZD10</label>
    </interactant>
    <organismsDiffer>false</organismsDiffer>
    <experiments>2</experiments>
</comment>
<comment type="interaction">
    <interactant intactId="EBI-8803836">
        <id>Q9Y5L2</id>
    </interactant>
    <interactant intactId="EBI-2515857">
        <id>O43681</id>
        <label>GET3</label>
    </interactant>
    <organismsDiffer>false</organismsDiffer>
    <experiments>3</experiments>
</comment>
<comment type="subcellular location">
    <subcellularLocation>
        <location>Lipid droplet</location>
    </subcellularLocation>
    <subcellularLocation>
        <location>Secreted</location>
    </subcellularLocation>
    <subcellularLocation>
        <location evidence="7">Membrane</location>
        <topology evidence="7">Single-pass membrane protein</topology>
    </subcellularLocation>
</comment>
<comment type="tissue specificity">
    <text evidence="4 5 6">Highly expressed in renal cell carcinoma cells but barely detectable in adjacent normal kidney tissue. Detected in some cervical and endometrial cancers. Expression also detected in fetal kidney with little or no expression observed in normal adult heart, liver, lung, pancreas, prostate or spinal cord (at protein level).</text>
</comment>
<comment type="induction">
    <text evidence="3 5">By hypoxia but highly abundant under normoxic conditions (at protein level).</text>
</comment>
<dbReference type="EMBL" id="AF144755">
    <property type="protein sequence ID" value="AAD37585.1"/>
    <property type="molecule type" value="mRNA"/>
</dbReference>
<dbReference type="EMBL" id="AK222583">
    <property type="protein sequence ID" value="BAD96303.1"/>
    <property type="molecule type" value="mRNA"/>
</dbReference>
<dbReference type="EMBL" id="CH236947">
    <property type="protein sequence ID" value="EAL24309.1"/>
    <property type="molecule type" value="Genomic_DNA"/>
</dbReference>
<dbReference type="EMBL" id="BC001863">
    <property type="protein sequence ID" value="AAH01863.1"/>
    <property type="molecule type" value="mRNA"/>
</dbReference>
<dbReference type="EMBL" id="BC093742">
    <property type="protein sequence ID" value="AAH93742.1"/>
    <property type="molecule type" value="mRNA"/>
</dbReference>
<dbReference type="EMBL" id="BC112183">
    <property type="protein sequence ID" value="AAI12184.1"/>
    <property type="molecule type" value="mRNA"/>
</dbReference>
<dbReference type="CCDS" id="CCDS5802.1"/>
<dbReference type="RefSeq" id="NP_001092256.1">
    <property type="nucleotide sequence ID" value="NM_001098786.2"/>
</dbReference>
<dbReference type="RefSeq" id="NP_037464.1">
    <property type="nucleotide sequence ID" value="NM_013332.4"/>
</dbReference>
<dbReference type="SMR" id="Q9Y5L2"/>
<dbReference type="BioGRID" id="118964">
    <property type="interactions" value="4"/>
</dbReference>
<dbReference type="FunCoup" id="Q9Y5L2">
    <property type="interactions" value="23"/>
</dbReference>
<dbReference type="IntAct" id="Q9Y5L2">
    <property type="interactions" value="3"/>
</dbReference>
<dbReference type="MINT" id="Q9Y5L2"/>
<dbReference type="STRING" id="9606.ENSP00000257696"/>
<dbReference type="GlyGen" id="Q9Y5L2">
    <property type="glycosylation" value="6 sites, 1 O-linked glycan (6 sites)"/>
</dbReference>
<dbReference type="iPTMnet" id="Q9Y5L2"/>
<dbReference type="PhosphoSitePlus" id="Q9Y5L2"/>
<dbReference type="BioMuta" id="HILPDA"/>
<dbReference type="jPOST" id="Q9Y5L2"/>
<dbReference type="MassIVE" id="Q9Y5L2"/>
<dbReference type="PaxDb" id="9606-ENSP00000257696"/>
<dbReference type="PeptideAtlas" id="Q9Y5L2"/>
<dbReference type="ProteomicsDB" id="86439"/>
<dbReference type="Pumba" id="Q9Y5L2"/>
<dbReference type="Antibodypedia" id="2129">
    <property type="antibodies" value="26 antibodies from 13 providers"/>
</dbReference>
<dbReference type="DNASU" id="29923"/>
<dbReference type="Ensembl" id="ENST00000257696.5">
    <property type="protein sequence ID" value="ENSP00000257696.4"/>
    <property type="gene ID" value="ENSG00000135245.10"/>
</dbReference>
<dbReference type="Ensembl" id="ENST00000435296.2">
    <property type="protein sequence ID" value="ENSP00000388871.2"/>
    <property type="gene ID" value="ENSG00000135245.10"/>
</dbReference>
<dbReference type="GeneID" id="29923"/>
<dbReference type="KEGG" id="hsa:29923"/>
<dbReference type="MANE-Select" id="ENST00000257696.5">
    <property type="protein sequence ID" value="ENSP00000257696.4"/>
    <property type="RefSeq nucleotide sequence ID" value="NM_013332.4"/>
    <property type="RefSeq protein sequence ID" value="NP_037464.1"/>
</dbReference>
<dbReference type="UCSC" id="uc003vne.5">
    <property type="organism name" value="human"/>
</dbReference>
<dbReference type="AGR" id="HGNC:28859"/>
<dbReference type="CTD" id="29923"/>
<dbReference type="DisGeNET" id="29923"/>
<dbReference type="GeneCards" id="HILPDA"/>
<dbReference type="HGNC" id="HGNC:28859">
    <property type="gene designation" value="HILPDA"/>
</dbReference>
<dbReference type="HPA" id="ENSG00000135245">
    <property type="expression patterns" value="Tissue enhanced (esophagus)"/>
</dbReference>
<dbReference type="MIM" id="617905">
    <property type="type" value="gene"/>
</dbReference>
<dbReference type="neXtProt" id="NX_Q9Y5L2"/>
<dbReference type="OpenTargets" id="ENSG00000135245"/>
<dbReference type="PharmGKB" id="PA164717457"/>
<dbReference type="VEuPathDB" id="HostDB:ENSG00000135245"/>
<dbReference type="eggNOG" id="ENOG502T735">
    <property type="taxonomic scope" value="Eukaryota"/>
</dbReference>
<dbReference type="GeneTree" id="ENSGT00390000014201"/>
<dbReference type="HOGENOM" id="CLU_192601_0_0_1"/>
<dbReference type="InParanoid" id="Q9Y5L2"/>
<dbReference type="OMA" id="WAVRGHL"/>
<dbReference type="OrthoDB" id="9825938at2759"/>
<dbReference type="PAN-GO" id="Q9Y5L2">
    <property type="GO annotations" value="2 GO annotations based on evolutionary models"/>
</dbReference>
<dbReference type="PhylomeDB" id="Q9Y5L2"/>
<dbReference type="PathwayCommons" id="Q9Y5L2"/>
<dbReference type="Reactome" id="R-HSA-8964572">
    <property type="pathway name" value="Lipid particle organization"/>
</dbReference>
<dbReference type="SignaLink" id="Q9Y5L2"/>
<dbReference type="BioGRID-ORCS" id="29923">
    <property type="hits" value="5 hits in 1150 CRISPR screens"/>
</dbReference>
<dbReference type="GenomeRNAi" id="29923"/>
<dbReference type="Pharos" id="Q9Y5L2">
    <property type="development level" value="Tbio"/>
</dbReference>
<dbReference type="PRO" id="PR:Q9Y5L2"/>
<dbReference type="Proteomes" id="UP000005640">
    <property type="component" value="Chromosome 7"/>
</dbReference>
<dbReference type="RNAct" id="Q9Y5L2">
    <property type="molecule type" value="protein"/>
</dbReference>
<dbReference type="Bgee" id="ENSG00000135245">
    <property type="expression patterns" value="Expressed in vena cava and 204 other cell types or tissues"/>
</dbReference>
<dbReference type="GO" id="GO:0009986">
    <property type="term" value="C:cell surface"/>
    <property type="evidence" value="ECO:0000314"/>
    <property type="project" value="BHF-UCL"/>
</dbReference>
<dbReference type="GO" id="GO:0005829">
    <property type="term" value="C:cytosol"/>
    <property type="evidence" value="ECO:0000304"/>
    <property type="project" value="Reactome"/>
</dbReference>
<dbReference type="GO" id="GO:0005615">
    <property type="term" value="C:extracellular space"/>
    <property type="evidence" value="ECO:0000314"/>
    <property type="project" value="BHF-UCL"/>
</dbReference>
<dbReference type="GO" id="GO:0005811">
    <property type="term" value="C:lipid droplet"/>
    <property type="evidence" value="ECO:0000314"/>
    <property type="project" value="UniProtKB"/>
</dbReference>
<dbReference type="GO" id="GO:0016020">
    <property type="term" value="C:membrane"/>
    <property type="evidence" value="ECO:0007669"/>
    <property type="project" value="UniProtKB-SubCell"/>
</dbReference>
<dbReference type="GO" id="GO:0005654">
    <property type="term" value="C:nucleoplasm"/>
    <property type="evidence" value="ECO:0000314"/>
    <property type="project" value="HPA"/>
</dbReference>
<dbReference type="GO" id="GO:0030141">
    <property type="term" value="C:secretory granule"/>
    <property type="evidence" value="ECO:0000314"/>
    <property type="project" value="BHF-UCL"/>
</dbReference>
<dbReference type="GO" id="GO:0005102">
    <property type="term" value="F:signaling receptor binding"/>
    <property type="evidence" value="ECO:0000353"/>
    <property type="project" value="BHF-UCL"/>
</dbReference>
<dbReference type="GO" id="GO:0035425">
    <property type="term" value="P:autocrine signaling"/>
    <property type="evidence" value="ECO:0000314"/>
    <property type="project" value="BHF-UCL"/>
</dbReference>
<dbReference type="GO" id="GO:0071456">
    <property type="term" value="P:cellular response to hypoxia"/>
    <property type="evidence" value="ECO:0000270"/>
    <property type="project" value="UniProtKB"/>
</dbReference>
<dbReference type="GO" id="GO:0008284">
    <property type="term" value="P:positive regulation of cell population proliferation"/>
    <property type="evidence" value="ECO:0000314"/>
    <property type="project" value="BHF-UCL"/>
</dbReference>
<dbReference type="GO" id="GO:0001819">
    <property type="term" value="P:positive regulation of cytokine production"/>
    <property type="evidence" value="ECO:0000314"/>
    <property type="project" value="UniProtKB"/>
</dbReference>
<dbReference type="GO" id="GO:0010884">
    <property type="term" value="P:positive regulation of lipid storage"/>
    <property type="evidence" value="ECO:0000314"/>
    <property type="project" value="UniProtKB"/>
</dbReference>
<dbReference type="InterPro" id="IPR026190">
    <property type="entry name" value="Hipoxia_HILPDA"/>
</dbReference>
<dbReference type="PANTHER" id="PTHR16886:SF0">
    <property type="entry name" value="HYPOXIA-INDUCIBLE LIPID DROPLET-ASSOCIATED PROTEIN"/>
    <property type="match status" value="1"/>
</dbReference>
<dbReference type="PANTHER" id="PTHR16886">
    <property type="entry name" value="HYPOXIA-INDUCIBLE PROTEIN 2"/>
    <property type="match status" value="1"/>
</dbReference>
<dbReference type="Pfam" id="PF15220">
    <property type="entry name" value="HILPDA"/>
    <property type="match status" value="1"/>
</dbReference>
<name>HLPDA_HUMAN</name>
<organism>
    <name type="scientific">Homo sapiens</name>
    <name type="common">Human</name>
    <dbReference type="NCBI Taxonomy" id="9606"/>
    <lineage>
        <taxon>Eukaryota</taxon>
        <taxon>Metazoa</taxon>
        <taxon>Chordata</taxon>
        <taxon>Craniata</taxon>
        <taxon>Vertebrata</taxon>
        <taxon>Euteleostomi</taxon>
        <taxon>Mammalia</taxon>
        <taxon>Eutheria</taxon>
        <taxon>Euarchontoglires</taxon>
        <taxon>Primates</taxon>
        <taxon>Haplorrhini</taxon>
        <taxon>Catarrhini</taxon>
        <taxon>Hominidae</taxon>
        <taxon>Homo</taxon>
    </lineage>
</organism>
<protein>
    <recommendedName>
        <fullName>Hypoxia-inducible lipid droplet-associated protein</fullName>
    </recommendedName>
    <alternativeName>
        <fullName>Hypoxia-inducible gene 2 protein</fullName>
    </alternativeName>
</protein>
<proteinExistence type="evidence at protein level"/>
<sequence length="63" mass="6950">MKHVLNLYLLGVVLTLLSIFVRVMESLEGLLESPSPGTSWTTRSQLANTEPTKGLPDHPSRSM</sequence>